<organism>
    <name type="scientific">Arabidopsis thaliana</name>
    <name type="common">Mouse-ear cress</name>
    <dbReference type="NCBI Taxonomy" id="3702"/>
    <lineage>
        <taxon>Eukaryota</taxon>
        <taxon>Viridiplantae</taxon>
        <taxon>Streptophyta</taxon>
        <taxon>Embryophyta</taxon>
        <taxon>Tracheophyta</taxon>
        <taxon>Spermatophyta</taxon>
        <taxon>Magnoliopsida</taxon>
        <taxon>eudicotyledons</taxon>
        <taxon>Gunneridae</taxon>
        <taxon>Pentapetalae</taxon>
        <taxon>rosids</taxon>
        <taxon>malvids</taxon>
        <taxon>Brassicales</taxon>
        <taxon>Brassicaceae</taxon>
        <taxon>Camelineae</taxon>
        <taxon>Arabidopsis</taxon>
    </lineage>
</organism>
<comment type="function">
    <text evidence="4 5">Probable chromatin remodeling factor. Required for the initial establishment of DNA methylation and for accumulation of 24-nt siRNAs. May act on RNA templates by remodeling ribonucleoprotein structures and thereby influencing the availability of the RNA to polymerases.</text>
</comment>
<comment type="subunit">
    <text evidence="6 7">Interacts with NRPD1, NRPD3 and SHH1.</text>
</comment>
<comment type="subcellular location">
    <subcellularLocation>
        <location evidence="4">Nucleus</location>
        <location evidence="4">Nucleoplasm</location>
    </subcellularLocation>
    <subcellularLocation>
        <location evidence="4">Nucleus</location>
        <location evidence="4">Nucleolus</location>
    </subcellularLocation>
    <text>In the nucleolus, localized in a ring around the inner periphery.</text>
</comment>
<comment type="disruption phenotype">
    <text evidence="5">Decreased, but not completely blocked de novo methylation. Probably due to a partial redundancy with CLSY2.</text>
</comment>
<comment type="miscellaneous">
    <text evidence="9">Associates in vivo with Pol IV but not with Pol V.</text>
</comment>
<comment type="similarity">
    <text evidence="8">Belongs to the helicase family.</text>
</comment>
<keyword id="KW-0067">ATP-binding</keyword>
<keyword id="KW-0347">Helicase</keyword>
<keyword id="KW-0378">Hydrolase</keyword>
<keyword id="KW-0547">Nucleotide-binding</keyword>
<keyword id="KW-0539">Nucleus</keyword>
<keyword id="KW-1185">Reference proteome</keyword>
<evidence type="ECO:0000255" key="1">
    <source>
        <dbReference type="PROSITE-ProRule" id="PRU00541"/>
    </source>
</evidence>
<evidence type="ECO:0000255" key="2">
    <source>
        <dbReference type="PROSITE-ProRule" id="PRU00542"/>
    </source>
</evidence>
<evidence type="ECO:0000256" key="3">
    <source>
        <dbReference type="SAM" id="MobiDB-lite"/>
    </source>
</evidence>
<evidence type="ECO:0000269" key="4">
    <source>
    </source>
</evidence>
<evidence type="ECO:0000269" key="5">
    <source>
    </source>
</evidence>
<evidence type="ECO:0000269" key="6">
    <source>
    </source>
</evidence>
<evidence type="ECO:0000269" key="7">
    <source>
    </source>
</evidence>
<evidence type="ECO:0000305" key="8"/>
<evidence type="ECO:0000305" key="9">
    <source>
    </source>
</evidence>
<name>CLSY1_ARATH</name>
<protein>
    <recommendedName>
        <fullName>SNF2 domain-containing protein CLASSY 1</fullName>
    </recommendedName>
    <alternativeName>
        <fullName>Protein CHROMATIN REMODELING 38</fullName>
    </alternativeName>
</protein>
<proteinExistence type="evidence at protein level"/>
<feature type="chain" id="PRO_0000423313" description="SNF2 domain-containing protein CLASSY 1">
    <location>
        <begin position="1"/>
        <end position="1256"/>
    </location>
</feature>
<feature type="domain" description="Helicase ATP-binding" evidence="1">
    <location>
        <begin position="699"/>
        <end position="898"/>
    </location>
</feature>
<feature type="domain" description="Helicase C-terminal" evidence="2">
    <location>
        <begin position="1061"/>
        <end position="1222"/>
    </location>
</feature>
<feature type="region of interest" description="Disordered" evidence="3">
    <location>
        <begin position="269"/>
        <end position="290"/>
    </location>
</feature>
<feature type="region of interest" description="Disordered" evidence="3">
    <location>
        <begin position="448"/>
        <end position="467"/>
    </location>
</feature>
<feature type="short sequence motif" description="DEAH box">
    <location>
        <begin position="849"/>
        <end position="852"/>
    </location>
</feature>
<feature type="compositionally biased region" description="Basic and acidic residues" evidence="3">
    <location>
        <begin position="278"/>
        <end position="290"/>
    </location>
</feature>
<feature type="compositionally biased region" description="Basic residues" evidence="3">
    <location>
        <begin position="451"/>
        <end position="463"/>
    </location>
</feature>
<feature type="binding site" evidence="1">
    <location>
        <begin position="712"/>
        <end position="719"/>
    </location>
    <ligand>
        <name>ATP</name>
        <dbReference type="ChEBI" id="CHEBI:30616"/>
    </ligand>
</feature>
<feature type="mutagenesis site" description="Loss of endogenous 24-nt siRNAs." evidence="4">
    <original>G</original>
    <variation>E</variation>
    <location>
        <position position="592"/>
    </location>
</feature>
<feature type="mutagenesis site" description="Decreased de novo methylation." evidence="5">
    <original>P</original>
    <variation>L</variation>
    <location>
        <position position="738"/>
    </location>
</feature>
<reference key="1">
    <citation type="journal article" date="2000" name="Nature">
        <title>Sequence and analysis of chromosome 3 of the plant Arabidopsis thaliana.</title>
        <authorList>
            <person name="Salanoubat M."/>
            <person name="Lemcke K."/>
            <person name="Rieger M."/>
            <person name="Ansorge W."/>
            <person name="Unseld M."/>
            <person name="Fartmann B."/>
            <person name="Valle G."/>
            <person name="Bloecker H."/>
            <person name="Perez-Alonso M."/>
            <person name="Obermaier B."/>
            <person name="Delseny M."/>
            <person name="Boutry M."/>
            <person name="Grivell L.A."/>
            <person name="Mache R."/>
            <person name="Puigdomenech P."/>
            <person name="De Simone V."/>
            <person name="Choisne N."/>
            <person name="Artiguenave F."/>
            <person name="Robert C."/>
            <person name="Brottier P."/>
            <person name="Wincker P."/>
            <person name="Cattolico L."/>
            <person name="Weissenbach J."/>
            <person name="Saurin W."/>
            <person name="Quetier F."/>
            <person name="Schaefer M."/>
            <person name="Mueller-Auer S."/>
            <person name="Gabel C."/>
            <person name="Fuchs M."/>
            <person name="Benes V."/>
            <person name="Wurmbach E."/>
            <person name="Drzonek H."/>
            <person name="Erfle H."/>
            <person name="Jordan N."/>
            <person name="Bangert S."/>
            <person name="Wiedelmann R."/>
            <person name="Kranz H."/>
            <person name="Voss H."/>
            <person name="Holland R."/>
            <person name="Brandt P."/>
            <person name="Nyakatura G."/>
            <person name="Vezzi A."/>
            <person name="D'Angelo M."/>
            <person name="Pallavicini A."/>
            <person name="Toppo S."/>
            <person name="Simionati B."/>
            <person name="Conrad A."/>
            <person name="Hornischer K."/>
            <person name="Kauer G."/>
            <person name="Loehnert T.-H."/>
            <person name="Nordsiek G."/>
            <person name="Reichelt J."/>
            <person name="Scharfe M."/>
            <person name="Schoen O."/>
            <person name="Bargues M."/>
            <person name="Terol J."/>
            <person name="Climent J."/>
            <person name="Navarro P."/>
            <person name="Collado C."/>
            <person name="Perez-Perez A."/>
            <person name="Ottenwaelder B."/>
            <person name="Duchemin D."/>
            <person name="Cooke R."/>
            <person name="Laudie M."/>
            <person name="Berger-Llauro C."/>
            <person name="Purnelle B."/>
            <person name="Masuy D."/>
            <person name="de Haan M."/>
            <person name="Maarse A.C."/>
            <person name="Alcaraz J.-P."/>
            <person name="Cottet A."/>
            <person name="Casacuberta E."/>
            <person name="Monfort A."/>
            <person name="Argiriou A."/>
            <person name="Flores M."/>
            <person name="Liguori R."/>
            <person name="Vitale D."/>
            <person name="Mannhaupt G."/>
            <person name="Haase D."/>
            <person name="Schoof H."/>
            <person name="Rudd S."/>
            <person name="Zaccaria P."/>
            <person name="Mewes H.-W."/>
            <person name="Mayer K.F.X."/>
            <person name="Kaul S."/>
            <person name="Town C.D."/>
            <person name="Koo H.L."/>
            <person name="Tallon L.J."/>
            <person name="Jenkins J."/>
            <person name="Rooney T."/>
            <person name="Rizzo M."/>
            <person name="Walts A."/>
            <person name="Utterback T."/>
            <person name="Fujii C.Y."/>
            <person name="Shea T.P."/>
            <person name="Creasy T.H."/>
            <person name="Haas B."/>
            <person name="Maiti R."/>
            <person name="Wu D."/>
            <person name="Peterson J."/>
            <person name="Van Aken S."/>
            <person name="Pai G."/>
            <person name="Militscher J."/>
            <person name="Sellers P."/>
            <person name="Gill J.E."/>
            <person name="Feldblyum T.V."/>
            <person name="Preuss D."/>
            <person name="Lin X."/>
            <person name="Nierman W.C."/>
            <person name="Salzberg S.L."/>
            <person name="White O."/>
            <person name="Venter J.C."/>
            <person name="Fraser C.M."/>
            <person name="Kaneko T."/>
            <person name="Nakamura Y."/>
            <person name="Sato S."/>
            <person name="Kato T."/>
            <person name="Asamizu E."/>
            <person name="Sasamoto S."/>
            <person name="Kimura T."/>
            <person name="Idesawa K."/>
            <person name="Kawashima K."/>
            <person name="Kishida Y."/>
            <person name="Kiyokawa C."/>
            <person name="Kohara M."/>
            <person name="Matsumoto M."/>
            <person name="Matsuno A."/>
            <person name="Muraki A."/>
            <person name="Nakayama S."/>
            <person name="Nakazaki N."/>
            <person name="Shinpo S."/>
            <person name="Takeuchi C."/>
            <person name="Wada T."/>
            <person name="Watanabe A."/>
            <person name="Yamada M."/>
            <person name="Yasuda M."/>
            <person name="Tabata S."/>
        </authorList>
    </citation>
    <scope>NUCLEOTIDE SEQUENCE [LARGE SCALE GENOMIC DNA]</scope>
    <source>
        <strain>cv. Columbia</strain>
    </source>
</reference>
<reference key="2">
    <citation type="journal article" date="2017" name="Plant J.">
        <title>Araport11: a complete reannotation of the Arabidopsis thaliana reference genome.</title>
        <authorList>
            <person name="Cheng C.Y."/>
            <person name="Krishnakumar V."/>
            <person name="Chan A.P."/>
            <person name="Thibaud-Nissen F."/>
            <person name="Schobel S."/>
            <person name="Town C.D."/>
        </authorList>
    </citation>
    <scope>GENOME REANNOTATION</scope>
    <source>
        <strain>cv. Columbia</strain>
    </source>
</reference>
<reference key="3">
    <citation type="journal article" date="2007" name="Plant Cell">
        <title>An SNF2 protein associated with nuclear RNA silencing and the spread of a silencing signal between cells in Arabidopsis.</title>
        <authorList>
            <person name="Smith L.M."/>
            <person name="Pontes O."/>
            <person name="Searle I."/>
            <person name="Yelina N."/>
            <person name="Yousafzai F.K."/>
            <person name="Herr A.J."/>
            <person name="Pikaard C.S."/>
            <person name="Baulcombe D.C."/>
        </authorList>
    </citation>
    <scope>FUNCTION</scope>
    <scope>3D-STRUCTURE MODELING</scope>
    <scope>SUBCELLULAR LOCATION</scope>
    <scope>MUTAGENESIS OF GLY-592</scope>
    <scope>GENE FAMILY</scope>
    <scope>NOMENCLATURE</scope>
</reference>
<reference key="4">
    <citation type="journal article" date="2011" name="Epigenetics">
        <title>Identification of genes required for de novo DNA methylation in Arabidopsis.</title>
        <authorList>
            <person name="Greenberg M.V."/>
            <person name="Ausin I."/>
            <person name="Chan S.W."/>
            <person name="Cokus S.J."/>
            <person name="Cuperus J.T."/>
            <person name="Feng S."/>
            <person name="Law J.A."/>
            <person name="Chu C."/>
            <person name="Pellegrini M."/>
            <person name="Carrington J.C."/>
            <person name="Jacobsen S.E."/>
        </authorList>
    </citation>
    <scope>FUNCTION</scope>
    <scope>MUTAGENESIS OF PRO-738</scope>
    <scope>DISRUPTION PHENOTYPE</scope>
</reference>
<reference key="5">
    <citation type="journal article" date="2011" name="PLoS Genet.">
        <title>SHH1, a homeodomain protein required for DNA methylation, as well as RDR2, RDM4, and chromatin remodeling factors, associate with RNA polymerase IV.</title>
        <authorList>
            <person name="Law J.A."/>
            <person name="Vashisht A.A."/>
            <person name="Wohlschlegel J.A."/>
            <person name="Jacobsen S.E."/>
        </authorList>
    </citation>
    <scope>IDENTIFICATION BY MASS SPECTROMETRY</scope>
    <scope>INTERACTION WITH NRPD1</scope>
</reference>
<reference key="6">
    <citation type="journal article" date="2013" name="PLoS ONE">
        <title>Genome-wide comparative in silico analysis of the RNA helicase gene family in Zea mays and Glycine max: a comparison with Arabidopsis and Oryza sativa.</title>
        <authorList>
            <person name="Xu R."/>
            <person name="Zhang S."/>
            <person name="Huang J."/>
            <person name="Zheng C."/>
        </authorList>
    </citation>
    <scope>GENE FAMILY</scope>
</reference>
<reference key="7">
    <citation type="journal article" date="2013" name="Proc. Natl. Acad. Sci. U.S.A.">
        <title>DTF1 is a core component of RNA-directed DNA methylation and may assist in the recruitment of Pol IV.</title>
        <authorList>
            <person name="Zhang H."/>
            <person name="Ma Z.Y."/>
            <person name="Zeng L."/>
            <person name="Tanaka K."/>
            <person name="Zhang C.J."/>
            <person name="Ma J."/>
            <person name="Bai G."/>
            <person name="Wang P."/>
            <person name="Zhang S.W."/>
            <person name="Liu Z.W."/>
            <person name="Cai T."/>
            <person name="Tang K."/>
            <person name="Liu R."/>
            <person name="Shi X."/>
            <person name="He X.J."/>
            <person name="Zhu J.K."/>
        </authorList>
    </citation>
    <scope>IDENTIFICATION BY MASS SPECTROMETRY</scope>
    <scope>INTERACTION WITH SHH1; NRPD1 AND NRPD3</scope>
</reference>
<sequence>MKRKHYFEFNHPFNPCPFEVFCWGTWKAVEYLRIENGTMTMRLLENGQVLDDIKPFQRLRIRSRKATLIDCTSFLRPGIDVCVLYQRDEETPEPVWVDARVLSIERKPHESECLCTFHVSVYIDQGCIGLEKHRMNKVPVLVGLNEIAILQKFCKEQSLDRYYRWRYSEDCSSLVKTRLNLGKFLPDLTWLLVTSVLKNIVFQIRTVHEKMVYQIVTDEDCEGSSSSLSAMNITVEDGVVMSKVVLFNPAEDTCQDSDVKEEIEEEVMELRRSKRRSGRPERYGDSEIQPDSKDGWVRMMPYRYNIWNVSSDDDDEEEDCEDDKDTDDDLYLPLSHLLRKKGSKKGFSKDKQREIVLVDKTERKKRKKTEGFSRSCELSVIPFTPVFEPIPLEQFGLNANSLCGGVSGNLMDEIDKYRSKAAKYGKKKKKKIEMEEMESDLGWNGPIGNVVHKRNGPHSRIRSVSRETGVSEEPQIYKKRTLSAGAYNKLIDSYMSRIDSTIAAKDKATNVVEQWQGLKNPASFSIEAEERLSEEEEDDGETSENEILWREMELCLASSYILDDHEVRVDNEAFHKATCDCEHDYELNEEIGMCCRLCGHVGTEIKHVSAPFARHKKWTTETKQINEDDINTTIVNQDGVESHTFTIPVASSDMPSAEESDNVWSLIPQLKRKLHLHQKKAFEFLWKNLAGSVVPAMMDPSSDKIGGCVVSHTPGAGKTFLIIAFLASYLKIFPGKRPLVLAPKTTLYTWYKEFIKWEIPVPVHLLHGRRTYCMSKEKTIQFEGIPKPSQDVMHVLDCLDKIQKWHAQPSVLVMGYTSFLTLMREDSKFAHRKYMAKVLRESPGLLVLDEGHNPRSTKSRLRKALMKVDTDLRILLSGTLFQNNFCEYFNTLCLARPKFVHEVLVELDKKFQTNQAEQKAPHLLENRARKFFLDIIAKKIDTKVGDERLQGLNMLRNMTSGFIDNYEGSGSGSGDVLPGLQIYTLLMNSTDVQHKSLTKLQNIMSTYHGYPLELELLITLAAIHPWLVKTTTCCAKFFNPQELLEIEKLKHDAKKGSKVMFVLNLVFRVVKREKILIFCHNIAPIRLFLELFENVFRWKRGRELLTLTGDLELFERGRVIDKFEEPGGQSRVLLASITACAEGISLTAASRVIMLDSEWNPSKTKQAIARAFRPGQQKVVYVYQLLSRGTLEEDKYRRTTWKEWVSSMIFSEEFVEDPSQWQAEKIEDDVLREIVEEDKVKSFHMIMKNEKASTGG</sequence>
<accession>Q9M297</accession>
<gene>
    <name type="primary">CLSY1</name>
    <name type="synonym">CHR38</name>
    <name type="ordered locus">At3g42670</name>
    <name type="ORF">T12K4.120</name>
</gene>
<dbReference type="EMBL" id="AL138640">
    <property type="protein sequence ID" value="CAB86450.1"/>
    <property type="molecule type" value="Genomic_DNA"/>
</dbReference>
<dbReference type="EMBL" id="CP002686">
    <property type="protein sequence ID" value="AEE77745.1"/>
    <property type="molecule type" value="Genomic_DNA"/>
</dbReference>
<dbReference type="EMBL" id="CP002686">
    <property type="protein sequence ID" value="ANM65979.1"/>
    <property type="molecule type" value="Genomic_DNA"/>
</dbReference>
<dbReference type="EMBL" id="CP002686">
    <property type="protein sequence ID" value="ANM65981.1"/>
    <property type="molecule type" value="Genomic_DNA"/>
</dbReference>
<dbReference type="PIR" id="T47325">
    <property type="entry name" value="T47325"/>
</dbReference>
<dbReference type="RefSeq" id="NP_001327910.1">
    <property type="nucleotide sequence ID" value="NM_001339087.1"/>
</dbReference>
<dbReference type="RefSeq" id="NP_001327912.1">
    <property type="nucleotide sequence ID" value="NM_001339086.1"/>
</dbReference>
<dbReference type="RefSeq" id="NP_189853.1">
    <property type="nucleotide sequence ID" value="NM_114134.2"/>
</dbReference>
<dbReference type="BioGRID" id="8612">
    <property type="interactions" value="5"/>
</dbReference>
<dbReference type="FunCoup" id="Q9M297">
    <property type="interactions" value="143"/>
</dbReference>
<dbReference type="STRING" id="3702.Q9M297"/>
<dbReference type="PaxDb" id="3702-AT3G42670.1"/>
<dbReference type="ProteomicsDB" id="240892"/>
<dbReference type="EnsemblPlants" id="AT3G42670.1">
    <property type="protein sequence ID" value="AT3G42670.1"/>
    <property type="gene ID" value="AT3G42670"/>
</dbReference>
<dbReference type="EnsemblPlants" id="AT3G42670.2">
    <property type="protein sequence ID" value="AT3G42670.2"/>
    <property type="gene ID" value="AT3G42670"/>
</dbReference>
<dbReference type="EnsemblPlants" id="AT3G42670.3">
    <property type="protein sequence ID" value="AT3G42670.3"/>
    <property type="gene ID" value="AT3G42670"/>
</dbReference>
<dbReference type="GeneID" id="823287"/>
<dbReference type="Gramene" id="AT3G42670.1">
    <property type="protein sequence ID" value="AT3G42670.1"/>
    <property type="gene ID" value="AT3G42670"/>
</dbReference>
<dbReference type="Gramene" id="AT3G42670.2">
    <property type="protein sequence ID" value="AT3G42670.2"/>
    <property type="gene ID" value="AT3G42670"/>
</dbReference>
<dbReference type="Gramene" id="AT3G42670.3">
    <property type="protein sequence ID" value="AT3G42670.3"/>
    <property type="gene ID" value="AT3G42670"/>
</dbReference>
<dbReference type="KEGG" id="ath:AT3G42670"/>
<dbReference type="Araport" id="AT3G42670"/>
<dbReference type="TAIR" id="AT3G42670">
    <property type="gene designation" value="CHR38"/>
</dbReference>
<dbReference type="eggNOG" id="KOG0390">
    <property type="taxonomic scope" value="Eukaryota"/>
</dbReference>
<dbReference type="HOGENOM" id="CLU_002499_0_0_1"/>
<dbReference type="InParanoid" id="Q9M297"/>
<dbReference type="PhylomeDB" id="Q9M297"/>
<dbReference type="PRO" id="PR:Q9M297"/>
<dbReference type="Proteomes" id="UP000006548">
    <property type="component" value="Chromosome 3"/>
</dbReference>
<dbReference type="ExpressionAtlas" id="Q9M297">
    <property type="expression patterns" value="baseline and differential"/>
</dbReference>
<dbReference type="GO" id="GO:0005730">
    <property type="term" value="C:nucleolus"/>
    <property type="evidence" value="ECO:0000314"/>
    <property type="project" value="TAIR"/>
</dbReference>
<dbReference type="GO" id="GO:0005654">
    <property type="term" value="C:nucleoplasm"/>
    <property type="evidence" value="ECO:0007669"/>
    <property type="project" value="UniProtKB-SubCell"/>
</dbReference>
<dbReference type="GO" id="GO:0005524">
    <property type="term" value="F:ATP binding"/>
    <property type="evidence" value="ECO:0007669"/>
    <property type="project" value="UniProtKB-KW"/>
</dbReference>
<dbReference type="GO" id="GO:0003682">
    <property type="term" value="F:chromatin binding"/>
    <property type="evidence" value="ECO:0007669"/>
    <property type="project" value="InterPro"/>
</dbReference>
<dbReference type="GO" id="GO:0004386">
    <property type="term" value="F:helicase activity"/>
    <property type="evidence" value="ECO:0007669"/>
    <property type="project" value="UniProtKB-KW"/>
</dbReference>
<dbReference type="GO" id="GO:0016787">
    <property type="term" value="F:hydrolase activity"/>
    <property type="evidence" value="ECO:0007669"/>
    <property type="project" value="UniProtKB-KW"/>
</dbReference>
<dbReference type="GO" id="GO:0080188">
    <property type="term" value="P:gene silencing by siRNA-directed DNA methylation"/>
    <property type="evidence" value="ECO:0007669"/>
    <property type="project" value="InterPro"/>
</dbReference>
<dbReference type="GO" id="GO:1900370">
    <property type="term" value="P:positive regulation of post-transcriptional gene silencing by RNA"/>
    <property type="evidence" value="ECO:0000315"/>
    <property type="project" value="TAIR"/>
</dbReference>
<dbReference type="GO" id="GO:0031047">
    <property type="term" value="P:regulatory ncRNA-mediated gene silencing"/>
    <property type="evidence" value="ECO:0000315"/>
    <property type="project" value="TAIR"/>
</dbReference>
<dbReference type="CDD" id="cd18007">
    <property type="entry name" value="DEXHc_ATRX-like"/>
    <property type="match status" value="1"/>
</dbReference>
<dbReference type="CDD" id="cd18793">
    <property type="entry name" value="SF2_C_SNF"/>
    <property type="match status" value="1"/>
</dbReference>
<dbReference type="FunFam" id="3.40.50.10810:FF:000087">
    <property type="entry name" value="Chromatin remodeling 38"/>
    <property type="match status" value="1"/>
</dbReference>
<dbReference type="FunFam" id="3.40.50.300:FF:003253">
    <property type="entry name" value="Chromatin remodeling 38"/>
    <property type="match status" value="1"/>
</dbReference>
<dbReference type="Gene3D" id="3.40.50.300">
    <property type="entry name" value="P-loop containing nucleotide triphosphate hydrolases"/>
    <property type="match status" value="1"/>
</dbReference>
<dbReference type="Gene3D" id="3.40.50.10810">
    <property type="entry name" value="Tandem AAA-ATPase domain"/>
    <property type="match status" value="1"/>
</dbReference>
<dbReference type="InterPro" id="IPR044567">
    <property type="entry name" value="CLSY/DRD1"/>
</dbReference>
<dbReference type="InterPro" id="IPR014001">
    <property type="entry name" value="Helicase_ATP-bd"/>
</dbReference>
<dbReference type="InterPro" id="IPR001650">
    <property type="entry name" value="Helicase_C-like"/>
</dbReference>
<dbReference type="InterPro" id="IPR027417">
    <property type="entry name" value="P-loop_NTPase"/>
</dbReference>
<dbReference type="InterPro" id="IPR032001">
    <property type="entry name" value="SAWADEE_dom"/>
</dbReference>
<dbReference type="InterPro" id="IPR038718">
    <property type="entry name" value="SNF2-like_sf"/>
</dbReference>
<dbReference type="InterPro" id="IPR049730">
    <property type="entry name" value="SNF2/RAD54-like_C"/>
</dbReference>
<dbReference type="InterPro" id="IPR000330">
    <property type="entry name" value="SNF2_N"/>
</dbReference>
<dbReference type="PANTHER" id="PTHR45821:SF8">
    <property type="entry name" value="SNF2 DOMAIN-CONTAINING PROTEIN CLASSY 1"/>
    <property type="match status" value="1"/>
</dbReference>
<dbReference type="PANTHER" id="PTHR45821">
    <property type="entry name" value="SNF2 DOMAIN-CONTAINING PROTEIN CLASSY 2-RELATED"/>
    <property type="match status" value="1"/>
</dbReference>
<dbReference type="Pfam" id="PF00271">
    <property type="entry name" value="Helicase_C"/>
    <property type="match status" value="1"/>
</dbReference>
<dbReference type="Pfam" id="PF16719">
    <property type="entry name" value="SAWADEE"/>
    <property type="match status" value="1"/>
</dbReference>
<dbReference type="Pfam" id="PF00176">
    <property type="entry name" value="SNF2-rel_dom"/>
    <property type="match status" value="1"/>
</dbReference>
<dbReference type="SMART" id="SM00487">
    <property type="entry name" value="DEXDc"/>
    <property type="match status" value="1"/>
</dbReference>
<dbReference type="SMART" id="SM00490">
    <property type="entry name" value="HELICc"/>
    <property type="match status" value="1"/>
</dbReference>
<dbReference type="SUPFAM" id="SSF52540">
    <property type="entry name" value="P-loop containing nucleoside triphosphate hydrolases"/>
    <property type="match status" value="2"/>
</dbReference>
<dbReference type="PROSITE" id="PS51192">
    <property type="entry name" value="HELICASE_ATP_BIND_1"/>
    <property type="match status" value="1"/>
</dbReference>
<dbReference type="PROSITE" id="PS51194">
    <property type="entry name" value="HELICASE_CTER"/>
    <property type="match status" value="1"/>
</dbReference>